<feature type="chain" id="PRO_1000188465" description="UPF0597 protein YhaM">
    <location>
        <begin position="1"/>
        <end position="436"/>
    </location>
</feature>
<organism>
    <name type="scientific">Salmonella enteritidis PT4 (strain P125109)</name>
    <dbReference type="NCBI Taxonomy" id="550537"/>
    <lineage>
        <taxon>Bacteria</taxon>
        <taxon>Pseudomonadati</taxon>
        <taxon>Pseudomonadota</taxon>
        <taxon>Gammaproteobacteria</taxon>
        <taxon>Enterobacterales</taxon>
        <taxon>Enterobacteriaceae</taxon>
        <taxon>Salmonella</taxon>
    </lineage>
</organism>
<comment type="similarity">
    <text evidence="1">Belongs to the UPF0597 family.</text>
</comment>
<proteinExistence type="inferred from homology"/>
<sequence length="436" mass="45151">MFESKINPLWQSFILAVQEEVKPALGCTEPISLALAAAAAAAELDGTVERIDAWVSPNLMKNGMGVTVPGTGMVGLPIAAALGALGGDAKAGLEVLKDASAKAVADAKAMLAAGHVAVMLQEPCNDILFSRAKVYSGDSWACVTIVGDHTNIVRIETNKGVVFTQADNAQEEEKNSPLGVLSHTSLEEILAFVNAVPFDAIRFILDAARLNGALSQEGLRGSWGLHIGSTLAKQCDRGLLAKDLSTAILIRTSAASDARMGGATLPAMSNSGSGNQGITATVPVMVVAEHVGADDERLARALMLSHLSAIYIHHQLPRLSALCAATTAAMGAAAGMAWLIDGRYDTIAMAISSMIGDVSGMICDGASNSCAMKVSTSASAAWKAVLMALDDTAVTGNEGIVAHNVEQSIANLCSLACRSMQQTDKQIIEIMASKAH</sequence>
<protein>
    <recommendedName>
        <fullName evidence="1">UPF0597 protein YhaM</fullName>
    </recommendedName>
</protein>
<name>YHAM_SALEP</name>
<reference key="1">
    <citation type="journal article" date="2008" name="Genome Res.">
        <title>Comparative genome analysis of Salmonella enteritidis PT4 and Salmonella gallinarum 287/91 provides insights into evolutionary and host adaptation pathways.</title>
        <authorList>
            <person name="Thomson N.R."/>
            <person name="Clayton D.J."/>
            <person name="Windhorst D."/>
            <person name="Vernikos G."/>
            <person name="Davidson S."/>
            <person name="Churcher C."/>
            <person name="Quail M.A."/>
            <person name="Stevens M."/>
            <person name="Jones M.A."/>
            <person name="Watson M."/>
            <person name="Barron A."/>
            <person name="Layton A."/>
            <person name="Pickard D."/>
            <person name="Kingsley R.A."/>
            <person name="Bignell A."/>
            <person name="Clark L."/>
            <person name="Harris B."/>
            <person name="Ormond D."/>
            <person name="Abdellah Z."/>
            <person name="Brooks K."/>
            <person name="Cherevach I."/>
            <person name="Chillingworth T."/>
            <person name="Woodward J."/>
            <person name="Norberczak H."/>
            <person name="Lord A."/>
            <person name="Arrowsmith C."/>
            <person name="Jagels K."/>
            <person name="Moule S."/>
            <person name="Mungall K."/>
            <person name="Saunders M."/>
            <person name="Whitehead S."/>
            <person name="Chabalgoity J.A."/>
            <person name="Maskell D."/>
            <person name="Humphreys T."/>
            <person name="Roberts M."/>
            <person name="Barrow P.A."/>
            <person name="Dougan G."/>
            <person name="Parkhill J."/>
        </authorList>
    </citation>
    <scope>NUCLEOTIDE SEQUENCE [LARGE SCALE GENOMIC DNA]</scope>
    <source>
        <strain>P125109</strain>
    </source>
</reference>
<evidence type="ECO:0000255" key="1">
    <source>
        <dbReference type="HAMAP-Rule" id="MF_01845"/>
    </source>
</evidence>
<accession>B5QZR6</accession>
<gene>
    <name evidence="1" type="primary">yhaM</name>
    <name type="ordered locus">SEN3079</name>
</gene>
<dbReference type="EMBL" id="AM933172">
    <property type="protein sequence ID" value="CAR34655.1"/>
    <property type="molecule type" value="Genomic_DNA"/>
</dbReference>
<dbReference type="RefSeq" id="WP_000463074.1">
    <property type="nucleotide sequence ID" value="NC_011294.1"/>
</dbReference>
<dbReference type="SMR" id="B5QZR6"/>
<dbReference type="KEGG" id="set:SEN3079"/>
<dbReference type="HOGENOM" id="CLU_051840_0_0_6"/>
<dbReference type="Proteomes" id="UP000000613">
    <property type="component" value="Chromosome"/>
</dbReference>
<dbReference type="GO" id="GO:0080146">
    <property type="term" value="F:L-cysteine desulfhydrase activity"/>
    <property type="evidence" value="ECO:0007669"/>
    <property type="project" value="TreeGrafter"/>
</dbReference>
<dbReference type="GO" id="GO:0019450">
    <property type="term" value="P:L-cysteine catabolic process to pyruvate"/>
    <property type="evidence" value="ECO:0007669"/>
    <property type="project" value="TreeGrafter"/>
</dbReference>
<dbReference type="HAMAP" id="MF_01845">
    <property type="entry name" value="UPF0597"/>
    <property type="match status" value="1"/>
</dbReference>
<dbReference type="InterPro" id="IPR005130">
    <property type="entry name" value="Ser_deHydtase-like_asu"/>
</dbReference>
<dbReference type="InterPro" id="IPR021144">
    <property type="entry name" value="UPF0597"/>
</dbReference>
<dbReference type="PANTHER" id="PTHR30501">
    <property type="entry name" value="UPF0597 PROTEIN YHAM"/>
    <property type="match status" value="1"/>
</dbReference>
<dbReference type="PANTHER" id="PTHR30501:SF2">
    <property type="entry name" value="UPF0597 PROTEIN YHAM"/>
    <property type="match status" value="1"/>
</dbReference>
<dbReference type="Pfam" id="PF03313">
    <property type="entry name" value="SDH_alpha"/>
    <property type="match status" value="1"/>
</dbReference>
<dbReference type="PIRSF" id="PIRSF006054">
    <property type="entry name" value="UCP006054"/>
    <property type="match status" value="1"/>
</dbReference>